<accession>A7HBM0</accession>
<reference key="1">
    <citation type="journal article" date="2015" name="Genome Announc.">
        <title>Complete genome sequence of Anaeromyxobacter sp. Fw109-5, an anaerobic, metal-reducing bacterium isolated from a contaminated subsurface environment.</title>
        <authorList>
            <person name="Hwang C."/>
            <person name="Copeland A."/>
            <person name="Lucas S."/>
            <person name="Lapidus A."/>
            <person name="Barry K."/>
            <person name="Glavina Del Rio T."/>
            <person name="Dalin E."/>
            <person name="Tice H."/>
            <person name="Pitluck S."/>
            <person name="Sims D."/>
            <person name="Brettin T."/>
            <person name="Bruce D.C."/>
            <person name="Detter J.C."/>
            <person name="Han C.S."/>
            <person name="Schmutz J."/>
            <person name="Larimer F.W."/>
            <person name="Land M.L."/>
            <person name="Hauser L.J."/>
            <person name="Kyrpides N."/>
            <person name="Lykidis A."/>
            <person name="Richardson P."/>
            <person name="Belieav A."/>
            <person name="Sanford R.A."/>
            <person name="Loeffler F.E."/>
            <person name="Fields M.W."/>
        </authorList>
    </citation>
    <scope>NUCLEOTIDE SEQUENCE [LARGE SCALE GENOMIC DNA]</scope>
    <source>
        <strain>Fw109-5</strain>
    </source>
</reference>
<proteinExistence type="inferred from homology"/>
<dbReference type="EMBL" id="CP000769">
    <property type="protein sequence ID" value="ABS26116.1"/>
    <property type="molecule type" value="Genomic_DNA"/>
</dbReference>
<dbReference type="RefSeq" id="WP_012096694.1">
    <property type="nucleotide sequence ID" value="NC_009675.1"/>
</dbReference>
<dbReference type="SMR" id="A7HBM0"/>
<dbReference type="STRING" id="404589.Anae109_1913"/>
<dbReference type="KEGG" id="afw:Anae109_1913"/>
<dbReference type="eggNOG" id="COG0089">
    <property type="taxonomic scope" value="Bacteria"/>
</dbReference>
<dbReference type="HOGENOM" id="CLU_037562_3_1_7"/>
<dbReference type="OrthoDB" id="9793353at2"/>
<dbReference type="Proteomes" id="UP000006382">
    <property type="component" value="Chromosome"/>
</dbReference>
<dbReference type="GO" id="GO:1990904">
    <property type="term" value="C:ribonucleoprotein complex"/>
    <property type="evidence" value="ECO:0007669"/>
    <property type="project" value="UniProtKB-KW"/>
</dbReference>
<dbReference type="GO" id="GO:0005840">
    <property type="term" value="C:ribosome"/>
    <property type="evidence" value="ECO:0007669"/>
    <property type="project" value="UniProtKB-KW"/>
</dbReference>
<dbReference type="GO" id="GO:0019843">
    <property type="term" value="F:rRNA binding"/>
    <property type="evidence" value="ECO:0007669"/>
    <property type="project" value="UniProtKB-UniRule"/>
</dbReference>
<dbReference type="GO" id="GO:0003735">
    <property type="term" value="F:structural constituent of ribosome"/>
    <property type="evidence" value="ECO:0007669"/>
    <property type="project" value="InterPro"/>
</dbReference>
<dbReference type="GO" id="GO:0006412">
    <property type="term" value="P:translation"/>
    <property type="evidence" value="ECO:0007669"/>
    <property type="project" value="UniProtKB-UniRule"/>
</dbReference>
<dbReference type="FunFam" id="3.30.70.330:FF:000001">
    <property type="entry name" value="50S ribosomal protein L23"/>
    <property type="match status" value="1"/>
</dbReference>
<dbReference type="Gene3D" id="3.30.70.330">
    <property type="match status" value="1"/>
</dbReference>
<dbReference type="HAMAP" id="MF_01369_B">
    <property type="entry name" value="Ribosomal_uL23_B"/>
    <property type="match status" value="1"/>
</dbReference>
<dbReference type="InterPro" id="IPR012677">
    <property type="entry name" value="Nucleotide-bd_a/b_plait_sf"/>
</dbReference>
<dbReference type="InterPro" id="IPR013025">
    <property type="entry name" value="Ribosomal_uL23-like"/>
</dbReference>
<dbReference type="InterPro" id="IPR012678">
    <property type="entry name" value="Ribosomal_uL23/eL15/eS24_sf"/>
</dbReference>
<dbReference type="InterPro" id="IPR001014">
    <property type="entry name" value="Ribosomal_uL23_CS"/>
</dbReference>
<dbReference type="NCBIfam" id="NF004359">
    <property type="entry name" value="PRK05738.1-3"/>
    <property type="match status" value="1"/>
</dbReference>
<dbReference type="NCBIfam" id="NF004363">
    <property type="entry name" value="PRK05738.2-4"/>
    <property type="match status" value="1"/>
</dbReference>
<dbReference type="NCBIfam" id="NF004366">
    <property type="entry name" value="PRK05738.3-2"/>
    <property type="match status" value="1"/>
</dbReference>
<dbReference type="PANTHER" id="PTHR11620">
    <property type="entry name" value="60S RIBOSOMAL PROTEIN L23A"/>
    <property type="match status" value="1"/>
</dbReference>
<dbReference type="Pfam" id="PF00276">
    <property type="entry name" value="Ribosomal_L23"/>
    <property type="match status" value="1"/>
</dbReference>
<dbReference type="SUPFAM" id="SSF54189">
    <property type="entry name" value="Ribosomal proteins S24e, L23 and L15e"/>
    <property type="match status" value="1"/>
</dbReference>
<dbReference type="PROSITE" id="PS00050">
    <property type="entry name" value="RIBOSOMAL_L23"/>
    <property type="match status" value="1"/>
</dbReference>
<protein>
    <recommendedName>
        <fullName evidence="1">Large ribosomal subunit protein uL23</fullName>
    </recommendedName>
    <alternativeName>
        <fullName evidence="2">50S ribosomal protein L23</fullName>
    </alternativeName>
</protein>
<evidence type="ECO:0000255" key="1">
    <source>
        <dbReference type="HAMAP-Rule" id="MF_01369"/>
    </source>
</evidence>
<evidence type="ECO:0000305" key="2"/>
<keyword id="KW-1185">Reference proteome</keyword>
<keyword id="KW-0687">Ribonucleoprotein</keyword>
<keyword id="KW-0689">Ribosomal protein</keyword>
<keyword id="KW-0694">RNA-binding</keyword>
<keyword id="KW-0699">rRNA-binding</keyword>
<sequence>MNLAIQDVVKRPLITEKAERNREANRQFAFEVHRDATKIQVKQAVEKLFNVHVLDVRTAIARGKNKRVGRNVGRRPNWKKAFVTLKEGETIALFEGT</sequence>
<feature type="chain" id="PRO_1000068037" description="Large ribosomal subunit protein uL23">
    <location>
        <begin position="1"/>
        <end position="97"/>
    </location>
</feature>
<organism>
    <name type="scientific">Anaeromyxobacter sp. (strain Fw109-5)</name>
    <dbReference type="NCBI Taxonomy" id="404589"/>
    <lineage>
        <taxon>Bacteria</taxon>
        <taxon>Pseudomonadati</taxon>
        <taxon>Myxococcota</taxon>
        <taxon>Myxococcia</taxon>
        <taxon>Myxococcales</taxon>
        <taxon>Cystobacterineae</taxon>
        <taxon>Anaeromyxobacteraceae</taxon>
        <taxon>Anaeromyxobacter</taxon>
    </lineage>
</organism>
<name>RL23_ANADF</name>
<gene>
    <name evidence="1" type="primary">rplW</name>
    <name type="ordered locus">Anae109_1913</name>
</gene>
<comment type="function">
    <text evidence="1">One of the early assembly proteins it binds 23S rRNA. One of the proteins that surrounds the polypeptide exit tunnel on the outside of the ribosome. Forms the main docking site for trigger factor binding to the ribosome.</text>
</comment>
<comment type="subunit">
    <text evidence="1">Part of the 50S ribosomal subunit. Contacts protein L29, and trigger factor when it is bound to the ribosome.</text>
</comment>
<comment type="similarity">
    <text evidence="1">Belongs to the universal ribosomal protein uL23 family.</text>
</comment>